<accession>B1LVH1</accession>
<organism>
    <name type="scientific">Methylobacterium radiotolerans (strain ATCC 27329 / DSM 1819 / JCM 2831 / NBRC 15690 / NCIMB 10815 / 0-1)</name>
    <dbReference type="NCBI Taxonomy" id="426355"/>
    <lineage>
        <taxon>Bacteria</taxon>
        <taxon>Pseudomonadati</taxon>
        <taxon>Pseudomonadota</taxon>
        <taxon>Alphaproteobacteria</taxon>
        <taxon>Hyphomicrobiales</taxon>
        <taxon>Methylobacteriaceae</taxon>
        <taxon>Methylobacterium</taxon>
    </lineage>
</organism>
<protein>
    <recommendedName>
        <fullName evidence="1">ATP synthase subunit alpha</fullName>
        <ecNumber evidence="1">7.1.2.2</ecNumber>
    </recommendedName>
    <alternativeName>
        <fullName evidence="1">ATP synthase F1 sector subunit alpha</fullName>
    </alternativeName>
    <alternativeName>
        <fullName evidence="1">F-ATPase subunit alpha</fullName>
    </alternativeName>
</protein>
<sequence>MDIRAAEISAILKDQIKNFGEEAEVSEVGQVLSVGDGIARAYGLDNVQAGEMVEFESGVRGMALNLEQDNVGIVIFGSDREIKEGQTVKRTGAIVDVPVGKGLLGRVVDALGNPIDGKGPIQSTERRRVDVKAPGIIPRKSVHEPMATGLKAIDALIPVGRGQRELIIGDRQTGKTAIALDTILNQKPGHTAGGDEKAKLYCIYVAIGQKRSTVAQFVKVLEDQGALEYSIVIAATASDAAPMQFIAPFAGCAMGEYFRDNGMHAVIVYDDLSKQAVAYRQMSLLLRRPPGREAYPGDVFYLHSRLLERAAKMGDAAGAGSLTALPVIETQANDVSAYIPTNVISITDGQIFLETDLFYQGVRPAVNVGLSVSRVGSSAQTKAMKKVAGKIKGELAQYREMAAFAQFGSDLDASTQALLNRGSRLTELLKQPQFSPLKMEEQVAVIYAGVNGYLDKLPVTKVRAFEDSLLSTLRSKHKDLLDSIAASKDLSDENAGKLKSVVESVAKSIG</sequence>
<keyword id="KW-0066">ATP synthesis</keyword>
<keyword id="KW-0067">ATP-binding</keyword>
<keyword id="KW-0997">Cell inner membrane</keyword>
<keyword id="KW-1003">Cell membrane</keyword>
<keyword id="KW-0139">CF(1)</keyword>
<keyword id="KW-0375">Hydrogen ion transport</keyword>
<keyword id="KW-0406">Ion transport</keyword>
<keyword id="KW-0472">Membrane</keyword>
<keyword id="KW-0547">Nucleotide-binding</keyword>
<keyword id="KW-1278">Translocase</keyword>
<keyword id="KW-0813">Transport</keyword>
<reference key="1">
    <citation type="submission" date="2008-03" db="EMBL/GenBank/DDBJ databases">
        <title>Complete sequence of chromosome of Methylobacterium radiotolerans JCM 2831.</title>
        <authorList>
            <consortium name="US DOE Joint Genome Institute"/>
            <person name="Copeland A."/>
            <person name="Lucas S."/>
            <person name="Lapidus A."/>
            <person name="Glavina del Rio T."/>
            <person name="Dalin E."/>
            <person name="Tice H."/>
            <person name="Bruce D."/>
            <person name="Goodwin L."/>
            <person name="Pitluck S."/>
            <person name="Kiss H."/>
            <person name="Brettin T."/>
            <person name="Detter J.C."/>
            <person name="Han C."/>
            <person name="Kuske C.R."/>
            <person name="Schmutz J."/>
            <person name="Larimer F."/>
            <person name="Land M."/>
            <person name="Hauser L."/>
            <person name="Kyrpides N."/>
            <person name="Mikhailova N."/>
            <person name="Marx C.J."/>
            <person name="Richardson P."/>
        </authorList>
    </citation>
    <scope>NUCLEOTIDE SEQUENCE [LARGE SCALE GENOMIC DNA]</scope>
    <source>
        <strain>ATCC 27329 / DSM 1819 / JCM 2831 / NBRC 15690 / NCIMB 10815 / 0-1</strain>
    </source>
</reference>
<evidence type="ECO:0000255" key="1">
    <source>
        <dbReference type="HAMAP-Rule" id="MF_01346"/>
    </source>
</evidence>
<gene>
    <name evidence="1" type="primary">atpA</name>
    <name type="ordered locus">Mrad2831_0605</name>
</gene>
<comment type="function">
    <text evidence="1">Produces ATP from ADP in the presence of a proton gradient across the membrane. The alpha chain is a regulatory subunit.</text>
</comment>
<comment type="catalytic activity">
    <reaction evidence="1">
        <text>ATP + H2O + 4 H(+)(in) = ADP + phosphate + 5 H(+)(out)</text>
        <dbReference type="Rhea" id="RHEA:57720"/>
        <dbReference type="ChEBI" id="CHEBI:15377"/>
        <dbReference type="ChEBI" id="CHEBI:15378"/>
        <dbReference type="ChEBI" id="CHEBI:30616"/>
        <dbReference type="ChEBI" id="CHEBI:43474"/>
        <dbReference type="ChEBI" id="CHEBI:456216"/>
        <dbReference type="EC" id="7.1.2.2"/>
    </reaction>
</comment>
<comment type="subunit">
    <text evidence="1">F-type ATPases have 2 components, CF(1) - the catalytic core - and CF(0) - the membrane proton channel. CF(1) has five subunits: alpha(3), beta(3), gamma(1), delta(1), epsilon(1). CF(0) has three main subunits: a(1), b(2) and c(9-12). The alpha and beta chains form an alternating ring which encloses part of the gamma chain. CF(1) is attached to CF(0) by a central stalk formed by the gamma and epsilon chains, while a peripheral stalk is formed by the delta and b chains.</text>
</comment>
<comment type="subcellular location">
    <subcellularLocation>
        <location evidence="1">Cell inner membrane</location>
        <topology evidence="1">Peripheral membrane protein</topology>
    </subcellularLocation>
</comment>
<comment type="similarity">
    <text evidence="1">Belongs to the ATPase alpha/beta chains family.</text>
</comment>
<name>ATPA_METRJ</name>
<dbReference type="EC" id="7.1.2.2" evidence="1"/>
<dbReference type="EMBL" id="CP001001">
    <property type="protein sequence ID" value="ACB22616.1"/>
    <property type="molecule type" value="Genomic_DNA"/>
</dbReference>
<dbReference type="RefSeq" id="WP_012317612.1">
    <property type="nucleotide sequence ID" value="NC_010505.1"/>
</dbReference>
<dbReference type="SMR" id="B1LVH1"/>
<dbReference type="STRING" id="426355.Mrad2831_0605"/>
<dbReference type="GeneID" id="6136619"/>
<dbReference type="KEGG" id="mrd:Mrad2831_0605"/>
<dbReference type="eggNOG" id="COG0056">
    <property type="taxonomic scope" value="Bacteria"/>
</dbReference>
<dbReference type="HOGENOM" id="CLU_010091_2_1_5"/>
<dbReference type="OrthoDB" id="9803053at2"/>
<dbReference type="Proteomes" id="UP000006589">
    <property type="component" value="Chromosome"/>
</dbReference>
<dbReference type="GO" id="GO:0005886">
    <property type="term" value="C:plasma membrane"/>
    <property type="evidence" value="ECO:0007669"/>
    <property type="project" value="UniProtKB-SubCell"/>
</dbReference>
<dbReference type="GO" id="GO:0045259">
    <property type="term" value="C:proton-transporting ATP synthase complex"/>
    <property type="evidence" value="ECO:0007669"/>
    <property type="project" value="UniProtKB-KW"/>
</dbReference>
<dbReference type="GO" id="GO:0043531">
    <property type="term" value="F:ADP binding"/>
    <property type="evidence" value="ECO:0007669"/>
    <property type="project" value="TreeGrafter"/>
</dbReference>
<dbReference type="GO" id="GO:0005524">
    <property type="term" value="F:ATP binding"/>
    <property type="evidence" value="ECO:0007669"/>
    <property type="project" value="UniProtKB-UniRule"/>
</dbReference>
<dbReference type="GO" id="GO:0046933">
    <property type="term" value="F:proton-transporting ATP synthase activity, rotational mechanism"/>
    <property type="evidence" value="ECO:0007669"/>
    <property type="project" value="UniProtKB-UniRule"/>
</dbReference>
<dbReference type="CDD" id="cd18113">
    <property type="entry name" value="ATP-synt_F1_alpha_C"/>
    <property type="match status" value="1"/>
</dbReference>
<dbReference type="CDD" id="cd18116">
    <property type="entry name" value="ATP-synt_F1_alpha_N"/>
    <property type="match status" value="1"/>
</dbReference>
<dbReference type="CDD" id="cd01132">
    <property type="entry name" value="F1-ATPase_alpha_CD"/>
    <property type="match status" value="1"/>
</dbReference>
<dbReference type="FunFam" id="1.20.150.20:FF:000001">
    <property type="entry name" value="ATP synthase subunit alpha"/>
    <property type="match status" value="1"/>
</dbReference>
<dbReference type="FunFam" id="2.40.30.20:FF:000001">
    <property type="entry name" value="ATP synthase subunit alpha"/>
    <property type="match status" value="1"/>
</dbReference>
<dbReference type="FunFam" id="3.40.50.300:FF:002432">
    <property type="entry name" value="ATP synthase subunit alpha, mitochondrial"/>
    <property type="match status" value="1"/>
</dbReference>
<dbReference type="Gene3D" id="2.40.30.20">
    <property type="match status" value="1"/>
</dbReference>
<dbReference type="Gene3D" id="1.20.150.20">
    <property type="entry name" value="ATP synthase alpha/beta chain, C-terminal domain"/>
    <property type="match status" value="1"/>
</dbReference>
<dbReference type="Gene3D" id="3.40.50.300">
    <property type="entry name" value="P-loop containing nucleotide triphosphate hydrolases"/>
    <property type="match status" value="1"/>
</dbReference>
<dbReference type="HAMAP" id="MF_01346">
    <property type="entry name" value="ATP_synth_alpha_bact"/>
    <property type="match status" value="1"/>
</dbReference>
<dbReference type="InterPro" id="IPR023366">
    <property type="entry name" value="ATP_synth_asu-like_sf"/>
</dbReference>
<dbReference type="InterPro" id="IPR000793">
    <property type="entry name" value="ATP_synth_asu_C"/>
</dbReference>
<dbReference type="InterPro" id="IPR038376">
    <property type="entry name" value="ATP_synth_asu_C_sf"/>
</dbReference>
<dbReference type="InterPro" id="IPR033732">
    <property type="entry name" value="ATP_synth_F1_a_nt-bd_dom"/>
</dbReference>
<dbReference type="InterPro" id="IPR005294">
    <property type="entry name" value="ATP_synth_F1_asu"/>
</dbReference>
<dbReference type="InterPro" id="IPR020003">
    <property type="entry name" value="ATPase_a/bsu_AS"/>
</dbReference>
<dbReference type="InterPro" id="IPR004100">
    <property type="entry name" value="ATPase_F1/V1/A1_a/bsu_N"/>
</dbReference>
<dbReference type="InterPro" id="IPR036121">
    <property type="entry name" value="ATPase_F1/V1/A1_a/bsu_N_sf"/>
</dbReference>
<dbReference type="InterPro" id="IPR000194">
    <property type="entry name" value="ATPase_F1/V1/A1_a/bsu_nucl-bd"/>
</dbReference>
<dbReference type="InterPro" id="IPR027417">
    <property type="entry name" value="P-loop_NTPase"/>
</dbReference>
<dbReference type="NCBIfam" id="TIGR00962">
    <property type="entry name" value="atpA"/>
    <property type="match status" value="1"/>
</dbReference>
<dbReference type="NCBIfam" id="NF009884">
    <property type="entry name" value="PRK13343.1"/>
    <property type="match status" value="1"/>
</dbReference>
<dbReference type="PANTHER" id="PTHR48082">
    <property type="entry name" value="ATP SYNTHASE SUBUNIT ALPHA, MITOCHONDRIAL"/>
    <property type="match status" value="1"/>
</dbReference>
<dbReference type="PANTHER" id="PTHR48082:SF2">
    <property type="entry name" value="ATP SYNTHASE SUBUNIT ALPHA, MITOCHONDRIAL"/>
    <property type="match status" value="1"/>
</dbReference>
<dbReference type="Pfam" id="PF00006">
    <property type="entry name" value="ATP-synt_ab"/>
    <property type="match status" value="1"/>
</dbReference>
<dbReference type="Pfam" id="PF00306">
    <property type="entry name" value="ATP-synt_ab_C"/>
    <property type="match status" value="1"/>
</dbReference>
<dbReference type="Pfam" id="PF02874">
    <property type="entry name" value="ATP-synt_ab_N"/>
    <property type="match status" value="1"/>
</dbReference>
<dbReference type="PIRSF" id="PIRSF039088">
    <property type="entry name" value="F_ATPase_subunit_alpha"/>
    <property type="match status" value="1"/>
</dbReference>
<dbReference type="SUPFAM" id="SSF47917">
    <property type="entry name" value="C-terminal domain of alpha and beta subunits of F1 ATP synthase"/>
    <property type="match status" value="1"/>
</dbReference>
<dbReference type="SUPFAM" id="SSF50615">
    <property type="entry name" value="N-terminal domain of alpha and beta subunits of F1 ATP synthase"/>
    <property type="match status" value="1"/>
</dbReference>
<dbReference type="SUPFAM" id="SSF52540">
    <property type="entry name" value="P-loop containing nucleoside triphosphate hydrolases"/>
    <property type="match status" value="1"/>
</dbReference>
<dbReference type="PROSITE" id="PS00152">
    <property type="entry name" value="ATPASE_ALPHA_BETA"/>
    <property type="match status" value="1"/>
</dbReference>
<feature type="chain" id="PRO_1000143407" description="ATP synthase subunit alpha">
    <location>
        <begin position="1"/>
        <end position="510"/>
    </location>
</feature>
<feature type="binding site" evidence="1">
    <location>
        <begin position="169"/>
        <end position="176"/>
    </location>
    <ligand>
        <name>ATP</name>
        <dbReference type="ChEBI" id="CHEBI:30616"/>
    </ligand>
</feature>
<feature type="site" description="Required for activity" evidence="1">
    <location>
        <position position="371"/>
    </location>
</feature>
<proteinExistence type="inferred from homology"/>